<reference key="1">
    <citation type="journal article" date="2019" name="Plant Physiol.">
        <title>CYP76B74 catalyzes the 3''-hydroxylation of geranylhydroquinone in shikonin biosynthesis.</title>
        <authorList>
            <person name="Wang S."/>
            <person name="Wang R."/>
            <person name="Liu T."/>
            <person name="Lv C."/>
            <person name="Liang J."/>
            <person name="Kang C."/>
            <person name="Zhou L."/>
            <person name="Guo J."/>
            <person name="Cui G."/>
            <person name="Zhang Y."/>
            <person name="Werck-Reichhart D."/>
            <person name="Guo L."/>
            <person name="Huang L."/>
        </authorList>
    </citation>
    <scope>NUCLEOTIDE SEQUENCE [MRNA]</scope>
    <scope>FUNCTION</scope>
    <scope>CATALYTIC ACTIVITY</scope>
    <scope>SUBCELLULAR LOCATION</scope>
</reference>
<comment type="function">
    <text evidence="3">Hydroxylase involved in the biosynthesis pathway of the red naphthoquinone pigment shikonin (PubMed:30498024). Catalyzes the key step C-3''-hydroxylation of the prenylated phenolic intermediate geranylhydroquinone to form 3''-hydroxygeranylhydroquinone (PubMed:30498024).</text>
</comment>
<comment type="catalytic activity">
    <reaction evidence="3">
        <text>(2E)-geranylhydroquinone + reduced [NADPH--hemoprotein reductase] + O2 = (2Z)-3''-hydroxygeranylhydroquinone + oxidized [NADPH--hemoprotein reductase] + H2O + H(+)</text>
        <dbReference type="Rhea" id="RHEA:28146"/>
        <dbReference type="Rhea" id="RHEA-COMP:11964"/>
        <dbReference type="Rhea" id="RHEA-COMP:11965"/>
        <dbReference type="ChEBI" id="CHEBI:15377"/>
        <dbReference type="ChEBI" id="CHEBI:15378"/>
        <dbReference type="ChEBI" id="CHEBI:15379"/>
        <dbReference type="ChEBI" id="CHEBI:24233"/>
        <dbReference type="ChEBI" id="CHEBI:57618"/>
        <dbReference type="ChEBI" id="CHEBI:58210"/>
        <dbReference type="ChEBI" id="CHEBI:61158"/>
        <dbReference type="EC" id="1.14.14.174"/>
    </reaction>
    <physiologicalReaction direction="left-to-right" evidence="3">
        <dbReference type="Rhea" id="RHEA:28147"/>
    </physiologicalReaction>
</comment>
<comment type="cofactor">
    <cofactor evidence="1">
        <name>heme</name>
        <dbReference type="ChEBI" id="CHEBI:30413"/>
    </cofactor>
</comment>
<comment type="subcellular location">
    <subcellularLocation>
        <location evidence="3">Endoplasmic reticulum membrane</location>
        <topology evidence="2">Single-pass membrane protein</topology>
    </subcellularLocation>
</comment>
<comment type="similarity">
    <text evidence="5">Belongs to the cytochrome P450 family.</text>
</comment>
<proteinExistence type="evidence at protein level"/>
<accession>A0A3Q9R4N5</accession>
<sequence length="496" mass="55741">MEYTTILVGFLIGFVLFKALTRKSKNLPPGPHVLPIIGNLHLVGSIPHKSILKLAEKYGPIMSLQFGQIPTIVVSSPSMAKEILQKQDVAFAGKRIPDALNAHNHWQFSVVWLPANSLWRTLRKILTSNIFTNNRLEASQHLRSQKVRDLVEYCKKSGDKGEAVEIGQAAYRTSLNLLSSTIFSKDLADYYSETGAPREFKDAIWNILVESVKPNLADFVPILSMFDLQGIKRRAGIHFGKGLKIMEGLVNERLEHRETHGATHNDILDIFLNYCDEHPDELDRHRVKHTILDLFIAGTDTTSSVTEWTMAELIQNPQVMKRAKDELAQVIGKGKCLEESDVARLPYLRCIMKEALRKHPPGPFLFPRRPEEDVEVAGYTIPKGAQVLVSIYALGRDPNSWEDPLAFKPERFLDSELDFRGNNFEMLPFGAGRRSCPGLPMAVRMVPLLLGSLINSFDWVLDGGMKPEDLSMEEKVGLTAQLAHPLKIVPIPVKEE</sequence>
<protein>
    <recommendedName>
        <fullName evidence="5">Geranylhydroquinone 3''-hydroxylase CYP76B74</fullName>
        <ecNumber evidence="3">1.14.14.174</ecNumber>
    </recommendedName>
    <alternativeName>
        <fullName evidence="4">Cytochrome P450 76B74</fullName>
    </alternativeName>
</protein>
<organism>
    <name type="scientific">Arnebia euchroma</name>
    <name type="common">Pink arnebia</name>
    <name type="synonym">Lithospermum euchromon</name>
    <dbReference type="NCBI Taxonomy" id="373122"/>
    <lineage>
        <taxon>Eukaryota</taxon>
        <taxon>Viridiplantae</taxon>
        <taxon>Streptophyta</taxon>
        <taxon>Embryophyta</taxon>
        <taxon>Tracheophyta</taxon>
        <taxon>Spermatophyta</taxon>
        <taxon>Magnoliopsida</taxon>
        <taxon>eudicotyledons</taxon>
        <taxon>Gunneridae</taxon>
        <taxon>Pentapetalae</taxon>
        <taxon>asterids</taxon>
        <taxon>lamiids</taxon>
        <taxon>Boraginales</taxon>
        <taxon>Boraginaceae</taxon>
        <taxon>Boraginoideae</taxon>
        <taxon>Lithospermeae</taxon>
        <taxon>Arnebia</taxon>
    </lineage>
</organism>
<gene>
    <name evidence="4" type="primary">CYP76B74</name>
</gene>
<dbReference type="EC" id="1.14.14.174" evidence="3"/>
<dbReference type="EMBL" id="MH077962">
    <property type="protein sequence ID" value="AZU97066.1"/>
    <property type="molecule type" value="mRNA"/>
</dbReference>
<dbReference type="SMR" id="A0A3Q9R4N5"/>
<dbReference type="KEGG" id="ag:AZU97066"/>
<dbReference type="BRENDA" id="1.14.14.174">
    <property type="organism ID" value="13261"/>
</dbReference>
<dbReference type="GO" id="GO:0005789">
    <property type="term" value="C:endoplasmic reticulum membrane"/>
    <property type="evidence" value="ECO:0007669"/>
    <property type="project" value="UniProtKB-SubCell"/>
</dbReference>
<dbReference type="GO" id="GO:0020037">
    <property type="term" value="F:heme binding"/>
    <property type="evidence" value="ECO:0007669"/>
    <property type="project" value="InterPro"/>
</dbReference>
<dbReference type="GO" id="GO:0005506">
    <property type="term" value="F:iron ion binding"/>
    <property type="evidence" value="ECO:0007669"/>
    <property type="project" value="InterPro"/>
</dbReference>
<dbReference type="GO" id="GO:0004497">
    <property type="term" value="F:monooxygenase activity"/>
    <property type="evidence" value="ECO:0007669"/>
    <property type="project" value="UniProtKB-KW"/>
</dbReference>
<dbReference type="GO" id="GO:0016705">
    <property type="term" value="F:oxidoreductase activity, acting on paired donors, with incorporation or reduction of molecular oxygen"/>
    <property type="evidence" value="ECO:0007669"/>
    <property type="project" value="InterPro"/>
</dbReference>
<dbReference type="CDD" id="cd11073">
    <property type="entry name" value="CYP76-like"/>
    <property type="match status" value="1"/>
</dbReference>
<dbReference type="FunFam" id="1.10.630.10:FF:000007">
    <property type="entry name" value="Cytochrome P450 76C4"/>
    <property type="match status" value="1"/>
</dbReference>
<dbReference type="Gene3D" id="1.10.630.10">
    <property type="entry name" value="Cytochrome P450"/>
    <property type="match status" value="1"/>
</dbReference>
<dbReference type="InterPro" id="IPR001128">
    <property type="entry name" value="Cyt_P450"/>
</dbReference>
<dbReference type="InterPro" id="IPR017972">
    <property type="entry name" value="Cyt_P450_CS"/>
</dbReference>
<dbReference type="InterPro" id="IPR002401">
    <property type="entry name" value="Cyt_P450_E_grp-I"/>
</dbReference>
<dbReference type="InterPro" id="IPR036396">
    <property type="entry name" value="Cyt_P450_sf"/>
</dbReference>
<dbReference type="PANTHER" id="PTHR47950">
    <property type="entry name" value="CYTOCHROME P450, FAMILY 76, SUBFAMILY C, POLYPEPTIDE 5-RELATED"/>
    <property type="match status" value="1"/>
</dbReference>
<dbReference type="PANTHER" id="PTHR47950:SF4">
    <property type="entry name" value="GERANIOL 8-HYDROXYLASE-LIKE"/>
    <property type="match status" value="1"/>
</dbReference>
<dbReference type="Pfam" id="PF00067">
    <property type="entry name" value="p450"/>
    <property type="match status" value="1"/>
</dbReference>
<dbReference type="PRINTS" id="PR00463">
    <property type="entry name" value="EP450I"/>
</dbReference>
<dbReference type="PRINTS" id="PR00385">
    <property type="entry name" value="P450"/>
</dbReference>
<dbReference type="SUPFAM" id="SSF48264">
    <property type="entry name" value="Cytochrome P450"/>
    <property type="match status" value="1"/>
</dbReference>
<dbReference type="PROSITE" id="PS00086">
    <property type="entry name" value="CYTOCHROME_P450"/>
    <property type="match status" value="1"/>
</dbReference>
<evidence type="ECO:0000250" key="1">
    <source>
        <dbReference type="UniProtKB" id="Q96242"/>
    </source>
</evidence>
<evidence type="ECO:0000255" key="2"/>
<evidence type="ECO:0000269" key="3">
    <source>
    </source>
</evidence>
<evidence type="ECO:0000303" key="4">
    <source>
    </source>
</evidence>
<evidence type="ECO:0000305" key="5"/>
<name>C76B7_ARNEU</name>
<feature type="chain" id="PRO_0000455169" description="Geranylhydroquinone 3''-hydroxylase CYP76B74">
    <location>
        <begin position="1"/>
        <end position="496"/>
    </location>
</feature>
<feature type="transmembrane region" description="Helical" evidence="2">
    <location>
        <begin position="3"/>
        <end position="23"/>
    </location>
</feature>
<feature type="binding site" description="axial binding residue" evidence="1">
    <location>
        <position position="436"/>
    </location>
    <ligand>
        <name>heme</name>
        <dbReference type="ChEBI" id="CHEBI:30413"/>
    </ligand>
    <ligandPart>
        <name>Fe</name>
        <dbReference type="ChEBI" id="CHEBI:18248"/>
    </ligandPart>
</feature>
<keyword id="KW-0256">Endoplasmic reticulum</keyword>
<keyword id="KW-0349">Heme</keyword>
<keyword id="KW-0408">Iron</keyword>
<keyword id="KW-0472">Membrane</keyword>
<keyword id="KW-0479">Metal-binding</keyword>
<keyword id="KW-0503">Monooxygenase</keyword>
<keyword id="KW-0560">Oxidoreductase</keyword>
<keyword id="KW-0812">Transmembrane</keyword>
<keyword id="KW-1133">Transmembrane helix</keyword>